<sequence>MSEVNKVSVSCEGFCPPPWIGQVAPFVCAVLDSQAISHWDLSIVCCTDAFIRRLNYDYRGIDSPTDVLSFENDGEYCDDAGTRFFLAGDIIISLESVRENSERFHVAAHEEFKRVLIHGILHLSGMDHQDNSPGQEMLRLQERILAQHCRVLSSGIPWES</sequence>
<comment type="function">
    <text evidence="1">Single strand-specific metallo-endoribonuclease involved in late-stage 70S ribosome quality control and in maturation of the 3' terminus of the 16S rRNA.</text>
</comment>
<comment type="cofactor">
    <cofactor evidence="1">
        <name>Zn(2+)</name>
        <dbReference type="ChEBI" id="CHEBI:29105"/>
    </cofactor>
    <text evidence="1">Binds 1 zinc ion.</text>
</comment>
<comment type="subcellular location">
    <subcellularLocation>
        <location evidence="1">Cytoplasm</location>
    </subcellularLocation>
</comment>
<comment type="similarity">
    <text evidence="1">Belongs to the endoribonuclease YbeY family.</text>
</comment>
<reference key="1">
    <citation type="journal article" date="2008" name="BMC Microbiol.">
        <title>Complete genome sequence of Treponema pallidum ssp. pallidum strain SS14 determined with oligonucleotide arrays.</title>
        <authorList>
            <person name="Matejkova P."/>
            <person name="Strouhal M."/>
            <person name="Smajs D."/>
            <person name="Norris S.J."/>
            <person name="Palzkill T."/>
            <person name="Petrosino J.F."/>
            <person name="Sodergren E."/>
            <person name="Norton J.E."/>
            <person name="Singh J."/>
            <person name="Richmond T.A."/>
            <person name="Molla M.N."/>
            <person name="Albert T.J."/>
            <person name="Weinstock G.M."/>
        </authorList>
    </citation>
    <scope>NUCLEOTIDE SEQUENCE [LARGE SCALE GENOMIC DNA]</scope>
    <source>
        <strain>SS14</strain>
    </source>
</reference>
<organism>
    <name type="scientific">Treponema pallidum subsp. pallidum (strain SS14)</name>
    <dbReference type="NCBI Taxonomy" id="455434"/>
    <lineage>
        <taxon>Bacteria</taxon>
        <taxon>Pseudomonadati</taxon>
        <taxon>Spirochaetota</taxon>
        <taxon>Spirochaetia</taxon>
        <taxon>Spirochaetales</taxon>
        <taxon>Treponemataceae</taxon>
        <taxon>Treponema</taxon>
    </lineage>
</organism>
<feature type="chain" id="PRO_1000089224" description="Endoribonuclease YbeY">
    <location>
        <begin position="1"/>
        <end position="160"/>
    </location>
</feature>
<feature type="binding site" evidence="1">
    <location>
        <position position="118"/>
    </location>
    <ligand>
        <name>Zn(2+)</name>
        <dbReference type="ChEBI" id="CHEBI:29105"/>
        <note>catalytic</note>
    </ligand>
</feature>
<feature type="binding site" evidence="1">
    <location>
        <position position="122"/>
    </location>
    <ligand>
        <name>Zn(2+)</name>
        <dbReference type="ChEBI" id="CHEBI:29105"/>
        <note>catalytic</note>
    </ligand>
</feature>
<feature type="binding site" evidence="1">
    <location>
        <position position="128"/>
    </location>
    <ligand>
        <name>Zn(2+)</name>
        <dbReference type="ChEBI" id="CHEBI:29105"/>
        <note>catalytic</note>
    </ligand>
</feature>
<protein>
    <recommendedName>
        <fullName evidence="1">Endoribonuclease YbeY</fullName>
        <ecNumber evidence="1">3.1.-.-</ecNumber>
    </recommendedName>
</protein>
<evidence type="ECO:0000255" key="1">
    <source>
        <dbReference type="HAMAP-Rule" id="MF_00009"/>
    </source>
</evidence>
<gene>
    <name evidence="1" type="primary">ybeY</name>
    <name type="ordered locus">TPASS_0650</name>
</gene>
<proteinExistence type="inferred from homology"/>
<name>YBEY_TREPS</name>
<keyword id="KW-0963">Cytoplasm</keyword>
<keyword id="KW-0255">Endonuclease</keyword>
<keyword id="KW-0378">Hydrolase</keyword>
<keyword id="KW-0479">Metal-binding</keyword>
<keyword id="KW-0540">Nuclease</keyword>
<keyword id="KW-0690">Ribosome biogenesis</keyword>
<keyword id="KW-0698">rRNA processing</keyword>
<keyword id="KW-0862">Zinc</keyword>
<accession>B2S3N9</accession>
<dbReference type="EC" id="3.1.-.-" evidence="1"/>
<dbReference type="EMBL" id="CP000805">
    <property type="protein sequence ID" value="ACD71068.1"/>
    <property type="molecule type" value="Genomic_DNA"/>
</dbReference>
<dbReference type="RefSeq" id="WP_010882095.1">
    <property type="nucleotide sequence ID" value="NC_021508.1"/>
</dbReference>
<dbReference type="SMR" id="B2S3N9"/>
<dbReference type="GeneID" id="93876418"/>
<dbReference type="KEGG" id="tpp:TPASS_0650"/>
<dbReference type="PATRIC" id="fig|455434.6.peg.644"/>
<dbReference type="Proteomes" id="UP000001202">
    <property type="component" value="Chromosome"/>
</dbReference>
<dbReference type="GO" id="GO:0005737">
    <property type="term" value="C:cytoplasm"/>
    <property type="evidence" value="ECO:0007669"/>
    <property type="project" value="UniProtKB-SubCell"/>
</dbReference>
<dbReference type="GO" id="GO:0004222">
    <property type="term" value="F:metalloendopeptidase activity"/>
    <property type="evidence" value="ECO:0007669"/>
    <property type="project" value="InterPro"/>
</dbReference>
<dbReference type="GO" id="GO:0004521">
    <property type="term" value="F:RNA endonuclease activity"/>
    <property type="evidence" value="ECO:0007669"/>
    <property type="project" value="UniProtKB-UniRule"/>
</dbReference>
<dbReference type="GO" id="GO:0008270">
    <property type="term" value="F:zinc ion binding"/>
    <property type="evidence" value="ECO:0007669"/>
    <property type="project" value="UniProtKB-UniRule"/>
</dbReference>
<dbReference type="GO" id="GO:0006364">
    <property type="term" value="P:rRNA processing"/>
    <property type="evidence" value="ECO:0007669"/>
    <property type="project" value="UniProtKB-UniRule"/>
</dbReference>
<dbReference type="Gene3D" id="3.40.390.30">
    <property type="entry name" value="Metalloproteases ('zincins'), catalytic domain"/>
    <property type="match status" value="1"/>
</dbReference>
<dbReference type="HAMAP" id="MF_00009">
    <property type="entry name" value="Endoribonucl_YbeY"/>
    <property type="match status" value="1"/>
</dbReference>
<dbReference type="InterPro" id="IPR023091">
    <property type="entry name" value="MetalPrtase_cat_dom_sf_prd"/>
</dbReference>
<dbReference type="InterPro" id="IPR002036">
    <property type="entry name" value="YbeY"/>
</dbReference>
<dbReference type="InterPro" id="IPR020549">
    <property type="entry name" value="YbeY_CS"/>
</dbReference>
<dbReference type="NCBIfam" id="TIGR00043">
    <property type="entry name" value="rRNA maturation RNase YbeY"/>
    <property type="match status" value="1"/>
</dbReference>
<dbReference type="PANTHER" id="PTHR46986">
    <property type="entry name" value="ENDORIBONUCLEASE YBEY, CHLOROPLASTIC"/>
    <property type="match status" value="1"/>
</dbReference>
<dbReference type="PANTHER" id="PTHR46986:SF1">
    <property type="entry name" value="ENDORIBONUCLEASE YBEY, CHLOROPLASTIC"/>
    <property type="match status" value="1"/>
</dbReference>
<dbReference type="Pfam" id="PF02130">
    <property type="entry name" value="YbeY"/>
    <property type="match status" value="1"/>
</dbReference>
<dbReference type="SUPFAM" id="SSF55486">
    <property type="entry name" value="Metalloproteases ('zincins'), catalytic domain"/>
    <property type="match status" value="1"/>
</dbReference>
<dbReference type="PROSITE" id="PS01306">
    <property type="entry name" value="UPF0054"/>
    <property type="match status" value="1"/>
</dbReference>